<reference key="1">
    <citation type="submission" date="2004-11" db="EMBL/GenBank/DDBJ databases">
        <title>Complete genome sequence of Thermus thermophilus HB8.</title>
        <authorList>
            <person name="Masui R."/>
            <person name="Kurokawa K."/>
            <person name="Nakagawa N."/>
            <person name="Tokunaga F."/>
            <person name="Koyama Y."/>
            <person name="Shibata T."/>
            <person name="Oshima T."/>
            <person name="Yokoyama S."/>
            <person name="Yasunaga T."/>
            <person name="Kuramitsu S."/>
        </authorList>
    </citation>
    <scope>NUCLEOTIDE SEQUENCE [LARGE SCALE GENOMIC DNA]</scope>
    <source>
        <strain>ATCC 27634 / DSM 579 / HB8</strain>
    </source>
</reference>
<reference key="2">
    <citation type="journal article" date="2015" name="Proc. Natl. Acad. Sci. U.S.A.">
        <title>Major reorientation of tRNA substrates defines specificity of dihydrouridine synthases.</title>
        <authorList>
            <person name="Byrne R.T."/>
            <person name="Jenkins H.T."/>
            <person name="Peters D.T."/>
            <person name="Whelan F."/>
            <person name="Stowell J."/>
            <person name="Aziz N."/>
            <person name="Kasatsky P."/>
            <person name="Rodnina M.V."/>
            <person name="Koonin E.V."/>
            <person name="Konevega A.L."/>
            <person name="Antson A.A."/>
        </authorList>
    </citation>
    <scope>FUNCTION</scope>
    <scope>SUBFAMILY-SPECIFIC TRNA BINDING SIGNATURE</scope>
</reference>
<reference key="3">
    <citation type="journal article" date="2011" name="Proc. Natl. Acad. Sci. U.S.A.">
        <title>Molecular basis of dihydrouridine formation on tRNA.</title>
        <authorList>
            <person name="Yu F."/>
            <person name="Tanaka Y."/>
            <person name="Yamashita K."/>
            <person name="Suzuki T."/>
            <person name="Nakamura A."/>
            <person name="Hirano N."/>
            <person name="Suzuki T."/>
            <person name="Yao M."/>
            <person name="Tanaka I."/>
        </authorList>
    </citation>
    <scope>X-RAY CRYSTALLOGRAPHY (1.70 ANGSTROMS) IN COMPLEXES WITH FMN AND TRNAS</scope>
    <scope>FUNCTION</scope>
    <scope>COFACTOR</scope>
    <scope>MUTAGENESIS STUDIES</scope>
    <scope>REACTION MECHANISM</scope>
    <scope>ACTIVE SITE</scope>
    <source>
        <strain>ATCC 27634 / DSM 579 / HB8</strain>
    </source>
</reference>
<gene>
    <name type="primary">dus</name>
    <name evidence="8" type="ordered locus">TTHA0016</name>
</gene>
<keyword id="KW-0002">3D-structure</keyword>
<keyword id="KW-0285">Flavoprotein</keyword>
<keyword id="KW-0288">FMN</keyword>
<keyword id="KW-0521">NADP</keyword>
<keyword id="KW-0547">Nucleotide-binding</keyword>
<keyword id="KW-0560">Oxidoreductase</keyword>
<keyword id="KW-1185">Reference proteome</keyword>
<keyword id="KW-0694">RNA-binding</keyword>
<keyword id="KW-0819">tRNA processing</keyword>
<keyword id="KW-0820">tRNA-binding</keyword>
<protein>
    <recommendedName>
        <fullName evidence="2 6">tRNA-dihydrouridine(20/20a) synthase</fullName>
        <ecNumber evidence="1 2">1.3.1.-</ecNumber>
        <ecNumber evidence="1 2">1.3.1.91</ecNumber>
    </recommendedName>
    <alternativeName>
        <fullName evidence="2 5">DusA-like U20-specific dihydrouridine synthase</fullName>
        <shortName evidence="2 5">U20-specific Dus</shortName>
    </alternativeName>
</protein>
<feature type="chain" id="PRO_0000433569" description="tRNA-dihydrouridine(20/20a) synthase">
    <location>
        <begin position="1"/>
        <end position="342"/>
    </location>
</feature>
<feature type="region of interest" description="Disordered" evidence="3">
    <location>
        <begin position="313"/>
        <end position="342"/>
    </location>
</feature>
<feature type="compositionally biased region" description="Basic and acidic residues" evidence="3">
    <location>
        <begin position="313"/>
        <end position="331"/>
    </location>
</feature>
<feature type="active site" description="Proton donor" evidence="6">
    <location>
        <position position="93"/>
    </location>
</feature>
<feature type="binding site" evidence="4 9 10 11">
    <location>
        <begin position="10"/>
        <end position="12"/>
    </location>
    <ligand>
        <name>FMN</name>
        <dbReference type="ChEBI" id="CHEBI:58210"/>
    </ligand>
</feature>
<feature type="binding site" evidence="4 9 10 11">
    <location>
        <position position="63"/>
    </location>
    <ligand>
        <name>FMN</name>
        <dbReference type="ChEBI" id="CHEBI:58210"/>
    </ligand>
</feature>
<feature type="binding site" evidence="4 9 10 11">
    <location>
        <position position="132"/>
    </location>
    <ligand>
        <name>FMN</name>
        <dbReference type="ChEBI" id="CHEBI:58210"/>
    </ligand>
</feature>
<feature type="binding site" evidence="4 9 10 11">
    <location>
        <position position="164"/>
    </location>
    <ligand>
        <name>FMN</name>
        <dbReference type="ChEBI" id="CHEBI:58210"/>
    </ligand>
</feature>
<feature type="binding site" evidence="4 9 10 11">
    <location>
        <begin position="203"/>
        <end position="205"/>
    </location>
    <ligand>
        <name>FMN</name>
        <dbReference type="ChEBI" id="CHEBI:58210"/>
    </ligand>
</feature>
<feature type="binding site" evidence="4 9 10 11">
    <location>
        <begin position="225"/>
        <end position="226"/>
    </location>
    <ligand>
        <name>FMN</name>
        <dbReference type="ChEBI" id="CHEBI:58210"/>
    </ligand>
</feature>
<feature type="site" description="Interacts with tRNA" evidence="4">
    <location>
        <position position="90"/>
    </location>
</feature>
<feature type="site" description="Interacts with tRNA; defines subfamily-specific binding signature" evidence="4 7">
    <location>
        <position position="97"/>
    </location>
</feature>
<feature type="site" description="Interacts with tRNA; defines subfamily-specific binding signature" evidence="4 7">
    <location>
        <position position="175"/>
    </location>
</feature>
<feature type="site" description="Interacts with tRNA" evidence="4">
    <location>
        <position position="178"/>
    </location>
</feature>
<feature type="site" description="Interacts with tRNA; defines subfamily-specific binding signature" evidence="4 7">
    <location>
        <position position="290"/>
    </location>
</feature>
<feature type="site" description="Interacts with tRNA; defines subfamily-specific binding signature" evidence="4 7">
    <location>
        <position position="293"/>
    </location>
</feature>
<feature type="strand" evidence="12">
    <location>
        <begin position="5"/>
        <end position="8"/>
    </location>
</feature>
<feature type="turn" evidence="12">
    <location>
        <begin position="12"/>
        <end position="14"/>
    </location>
</feature>
<feature type="helix" evidence="12">
    <location>
        <begin position="17"/>
        <end position="26"/>
    </location>
</feature>
<feature type="strand" evidence="12">
    <location>
        <begin position="28"/>
        <end position="33"/>
    </location>
</feature>
<feature type="helix" evidence="12">
    <location>
        <begin position="39"/>
        <end position="44"/>
    </location>
</feature>
<feature type="helix" evidence="12">
    <location>
        <begin position="47"/>
        <end position="51"/>
    </location>
</feature>
<feature type="helix" evidence="12">
    <location>
        <begin position="55"/>
        <end position="57"/>
    </location>
</feature>
<feature type="strand" evidence="12">
    <location>
        <begin position="59"/>
        <end position="65"/>
    </location>
</feature>
<feature type="helix" evidence="12">
    <location>
        <begin position="69"/>
        <end position="81"/>
    </location>
</feature>
<feature type="strand" evidence="12">
    <location>
        <begin position="85"/>
        <end position="91"/>
    </location>
</feature>
<feature type="helix" evidence="12">
    <location>
        <begin position="96"/>
        <end position="100"/>
    </location>
</feature>
<feature type="helix" evidence="12">
    <location>
        <begin position="104"/>
        <end position="109"/>
    </location>
</feature>
<feature type="helix" evidence="12">
    <location>
        <begin position="111"/>
        <end position="124"/>
    </location>
</feature>
<feature type="strand" evidence="12">
    <location>
        <begin position="129"/>
        <end position="135"/>
    </location>
</feature>
<feature type="helix" evidence="12">
    <location>
        <begin position="143"/>
        <end position="155"/>
    </location>
</feature>
<feature type="strand" evidence="12">
    <location>
        <begin position="160"/>
        <end position="164"/>
    </location>
</feature>
<feature type="helix" evidence="13">
    <location>
        <begin position="176"/>
        <end position="178"/>
    </location>
</feature>
<feature type="helix" evidence="12">
    <location>
        <begin position="185"/>
        <end position="194"/>
    </location>
</feature>
<feature type="strand" evidence="12">
    <location>
        <begin position="198"/>
        <end position="205"/>
    </location>
</feature>
<feature type="helix" evidence="12">
    <location>
        <begin position="209"/>
        <end position="216"/>
    </location>
</feature>
<feature type="strand" evidence="12">
    <location>
        <begin position="219"/>
        <end position="224"/>
    </location>
</feature>
<feature type="helix" evidence="12">
    <location>
        <begin position="226"/>
        <end position="230"/>
    </location>
</feature>
<feature type="helix" evidence="12">
    <location>
        <begin position="232"/>
        <end position="235"/>
    </location>
</feature>
<feature type="helix" evidence="12">
    <location>
        <begin position="238"/>
        <end position="241"/>
    </location>
</feature>
<feature type="helix" evidence="12">
    <location>
        <begin position="251"/>
        <end position="268"/>
    </location>
</feature>
<feature type="helix" evidence="12">
    <location>
        <begin position="272"/>
        <end position="276"/>
    </location>
</feature>
<feature type="turn" evidence="12">
    <location>
        <begin position="280"/>
        <end position="285"/>
    </location>
</feature>
<feature type="helix" evidence="12">
    <location>
        <begin position="289"/>
        <end position="299"/>
    </location>
</feature>
<feature type="helix" evidence="12">
    <location>
        <begin position="302"/>
        <end position="316"/>
    </location>
</feature>
<proteinExistence type="evidence at protein level"/>
<organism>
    <name type="scientific">Thermus thermophilus (strain ATCC 27634 / DSM 579 / HB8)</name>
    <dbReference type="NCBI Taxonomy" id="300852"/>
    <lineage>
        <taxon>Bacteria</taxon>
        <taxon>Thermotogati</taxon>
        <taxon>Deinococcota</taxon>
        <taxon>Deinococci</taxon>
        <taxon>Thermales</taxon>
        <taxon>Thermaceae</taxon>
        <taxon>Thermus</taxon>
    </lineage>
</organism>
<evidence type="ECO:0000250" key="1">
    <source>
        <dbReference type="UniProtKB" id="P32695"/>
    </source>
</evidence>
<evidence type="ECO:0000255" key="2">
    <source>
        <dbReference type="HAMAP-Rule" id="MF_02041"/>
    </source>
</evidence>
<evidence type="ECO:0000256" key="3">
    <source>
        <dbReference type="SAM" id="MobiDB-lite"/>
    </source>
</evidence>
<evidence type="ECO:0000269" key="4">
    <source>
    </source>
</evidence>
<evidence type="ECO:0000303" key="5">
    <source>
    </source>
</evidence>
<evidence type="ECO:0000305" key="6">
    <source>
    </source>
</evidence>
<evidence type="ECO:0000305" key="7">
    <source>
    </source>
</evidence>
<evidence type="ECO:0000312" key="8">
    <source>
        <dbReference type="EMBL" id="BAD69839.1"/>
    </source>
</evidence>
<evidence type="ECO:0007744" key="9">
    <source>
        <dbReference type="PDB" id="3B0P"/>
    </source>
</evidence>
<evidence type="ECO:0007744" key="10">
    <source>
        <dbReference type="PDB" id="3B0U"/>
    </source>
</evidence>
<evidence type="ECO:0007744" key="11">
    <source>
        <dbReference type="PDB" id="3B0V"/>
    </source>
</evidence>
<evidence type="ECO:0007829" key="12">
    <source>
        <dbReference type="PDB" id="3B0P"/>
    </source>
</evidence>
<evidence type="ECO:0007829" key="13">
    <source>
        <dbReference type="PDB" id="3B0U"/>
    </source>
</evidence>
<sequence length="342" mass="38474">MLDPRLSVAPMVDRTDRHFRFLVRQVSLGVRLYTEMTVDQAVLRGNRERLLAFRPEEHPIALQLAGSDPKSLAEAARIGEAFGYDEINLNLGCPSEKAQEGGYGACLLLDLARVREILKAMGEAVRVPVTVKMRLGLEGKETYRGLAQSVEAMAEAGVKVFVVHARSALLALSTKANREIPPLRHDWVHRLKGDFPQLTFVTNGGIRSLEEALFHLKRVDGVMLGRAVYEDPFVLEEADRRVFGLPRRPSRLEVARRMRAYLEEEVLKGTPPWAVLRHMLNLFRGRPKGRLWRRLLSEGRSLQALDRALRLMEEEVGEEGEKEKPGPRGQREAAPGPAREGV</sequence>
<accession>Q5SMC7</accession>
<dbReference type="EC" id="1.3.1.-" evidence="1 2"/>
<dbReference type="EC" id="1.3.1.91" evidence="1 2"/>
<dbReference type="EMBL" id="AP008226">
    <property type="protein sequence ID" value="BAD69839.1"/>
    <property type="molecule type" value="Genomic_DNA"/>
</dbReference>
<dbReference type="RefSeq" id="YP_143282.1">
    <property type="nucleotide sequence ID" value="NC_006461.1"/>
</dbReference>
<dbReference type="PDB" id="3B0P">
    <property type="method" value="X-ray"/>
    <property type="resolution" value="1.70 A"/>
    <property type="chains" value="A/B=1-342"/>
</dbReference>
<dbReference type="PDB" id="3B0U">
    <property type="method" value="X-ray"/>
    <property type="resolution" value="1.95 A"/>
    <property type="chains" value="X/Y=1-342"/>
</dbReference>
<dbReference type="PDB" id="3B0V">
    <property type="method" value="X-ray"/>
    <property type="resolution" value="3.51 A"/>
    <property type="chains" value="C/D=1-342"/>
</dbReference>
<dbReference type="PDBsum" id="3B0P"/>
<dbReference type="PDBsum" id="3B0U"/>
<dbReference type="PDBsum" id="3B0V"/>
<dbReference type="SMR" id="Q5SMC7"/>
<dbReference type="EnsemblBacteria" id="BAD69839">
    <property type="protein sequence ID" value="BAD69839"/>
    <property type="gene ID" value="BAD69839"/>
</dbReference>
<dbReference type="GeneID" id="3168530"/>
<dbReference type="KEGG" id="ttj:TTHA0016"/>
<dbReference type="eggNOG" id="COG0042">
    <property type="taxonomic scope" value="Bacteria"/>
</dbReference>
<dbReference type="HOGENOM" id="CLU_013299_2_1_0"/>
<dbReference type="PhylomeDB" id="Q5SMC7"/>
<dbReference type="EvolutionaryTrace" id="Q5SMC7"/>
<dbReference type="Proteomes" id="UP000000532">
    <property type="component" value="Chromosome"/>
</dbReference>
<dbReference type="GO" id="GO:0050660">
    <property type="term" value="F:flavin adenine dinucleotide binding"/>
    <property type="evidence" value="ECO:0007669"/>
    <property type="project" value="InterPro"/>
</dbReference>
<dbReference type="GO" id="GO:0010181">
    <property type="term" value="F:FMN binding"/>
    <property type="evidence" value="ECO:0000314"/>
    <property type="project" value="UniProtKB"/>
</dbReference>
<dbReference type="GO" id="GO:0000049">
    <property type="term" value="F:tRNA binding"/>
    <property type="evidence" value="ECO:0000314"/>
    <property type="project" value="UniProtKB"/>
</dbReference>
<dbReference type="GO" id="GO:0017150">
    <property type="term" value="F:tRNA dihydrouridine synthase activity"/>
    <property type="evidence" value="ECO:0000303"/>
    <property type="project" value="UniProtKB"/>
</dbReference>
<dbReference type="GO" id="GO:0102264">
    <property type="term" value="F:tRNA-dihydrouridine20 synthase activity"/>
    <property type="evidence" value="ECO:0007669"/>
    <property type="project" value="UniProtKB-EC"/>
</dbReference>
<dbReference type="GO" id="GO:0102266">
    <property type="term" value="F:tRNA-dihydrouridine20a synthase activity"/>
    <property type="evidence" value="ECO:0007669"/>
    <property type="project" value="RHEA"/>
</dbReference>
<dbReference type="GO" id="GO:0002943">
    <property type="term" value="P:tRNA dihydrouridine synthesis"/>
    <property type="evidence" value="ECO:0000303"/>
    <property type="project" value="UniProtKB"/>
</dbReference>
<dbReference type="CDD" id="cd02801">
    <property type="entry name" value="DUS_like_FMN"/>
    <property type="match status" value="1"/>
</dbReference>
<dbReference type="FunFam" id="3.20.20.70:FF:000083">
    <property type="entry name" value="tRNA-dihydrouridine(20/20a) synthase"/>
    <property type="match status" value="1"/>
</dbReference>
<dbReference type="Gene3D" id="1.20.120.1460">
    <property type="match status" value="1"/>
</dbReference>
<dbReference type="Gene3D" id="3.20.20.70">
    <property type="entry name" value="Aldolase class I"/>
    <property type="match status" value="1"/>
</dbReference>
<dbReference type="HAMAP" id="MF_02041">
    <property type="entry name" value="DusA_subfam"/>
    <property type="match status" value="1"/>
</dbReference>
<dbReference type="InterPro" id="IPR013785">
    <property type="entry name" value="Aldolase_TIM"/>
</dbReference>
<dbReference type="InterPro" id="IPR035587">
    <property type="entry name" value="DUS-like_FMN-bd"/>
</dbReference>
<dbReference type="InterPro" id="IPR001269">
    <property type="entry name" value="DUS_fam"/>
</dbReference>
<dbReference type="InterPro" id="IPR004653">
    <property type="entry name" value="DusA"/>
</dbReference>
<dbReference type="InterPro" id="IPR018517">
    <property type="entry name" value="tRNA_hU_synthase_CS"/>
</dbReference>
<dbReference type="NCBIfam" id="NF008774">
    <property type="entry name" value="PRK11815.1"/>
    <property type="match status" value="1"/>
</dbReference>
<dbReference type="PANTHER" id="PTHR42907">
    <property type="entry name" value="FMN-LINKED OXIDOREDUCTASES SUPERFAMILY PROTEIN"/>
    <property type="match status" value="1"/>
</dbReference>
<dbReference type="PANTHER" id="PTHR42907:SF1">
    <property type="entry name" value="FMN-LINKED OXIDOREDUCTASES SUPERFAMILY PROTEIN"/>
    <property type="match status" value="1"/>
</dbReference>
<dbReference type="Pfam" id="PF01207">
    <property type="entry name" value="Dus"/>
    <property type="match status" value="1"/>
</dbReference>
<dbReference type="PIRSF" id="PIRSF006621">
    <property type="entry name" value="Dus"/>
    <property type="match status" value="1"/>
</dbReference>
<dbReference type="SUPFAM" id="SSF51395">
    <property type="entry name" value="FMN-linked oxidoreductases"/>
    <property type="match status" value="1"/>
</dbReference>
<dbReference type="PROSITE" id="PS01136">
    <property type="entry name" value="UPF0034"/>
    <property type="match status" value="1"/>
</dbReference>
<name>DUSAL_THET8</name>
<comment type="function">
    <text evidence="2 6 7">Catalyzes the synthesis of 5,6-dihydrouridine (D), a modified base found in the D-loop of most tRNAs, via the reduction of the C5-C6 double bond in target uridines. Specifically modifies U20 and U20a in tRNAs.</text>
</comment>
<comment type="catalytic activity">
    <reaction evidence="2">
        <text>5,6-dihydrouridine(20) in tRNA + NADP(+) = uridine(20) in tRNA + NADPH + H(+)</text>
        <dbReference type="Rhea" id="RHEA:53336"/>
        <dbReference type="Rhea" id="RHEA-COMP:13533"/>
        <dbReference type="Rhea" id="RHEA-COMP:13534"/>
        <dbReference type="ChEBI" id="CHEBI:15378"/>
        <dbReference type="ChEBI" id="CHEBI:57783"/>
        <dbReference type="ChEBI" id="CHEBI:58349"/>
        <dbReference type="ChEBI" id="CHEBI:65315"/>
        <dbReference type="ChEBI" id="CHEBI:74443"/>
        <dbReference type="EC" id="1.3.1.91"/>
    </reaction>
</comment>
<comment type="catalytic activity">
    <reaction evidence="2">
        <text>5,6-dihydrouridine(20) in tRNA + NAD(+) = uridine(20) in tRNA + NADH + H(+)</text>
        <dbReference type="Rhea" id="RHEA:53340"/>
        <dbReference type="Rhea" id="RHEA-COMP:13533"/>
        <dbReference type="Rhea" id="RHEA-COMP:13534"/>
        <dbReference type="ChEBI" id="CHEBI:15378"/>
        <dbReference type="ChEBI" id="CHEBI:57540"/>
        <dbReference type="ChEBI" id="CHEBI:57945"/>
        <dbReference type="ChEBI" id="CHEBI:65315"/>
        <dbReference type="ChEBI" id="CHEBI:74443"/>
        <dbReference type="EC" id="1.3.1.91"/>
    </reaction>
</comment>
<comment type="catalytic activity">
    <reaction evidence="2">
        <text>5,6-dihydrouridine(20a) in tRNA + NADP(+) = uridine(20a) in tRNA + NADPH + H(+)</text>
        <dbReference type="Rhea" id="RHEA:53344"/>
        <dbReference type="Rhea" id="RHEA-COMP:13535"/>
        <dbReference type="Rhea" id="RHEA-COMP:13536"/>
        <dbReference type="ChEBI" id="CHEBI:15378"/>
        <dbReference type="ChEBI" id="CHEBI:57783"/>
        <dbReference type="ChEBI" id="CHEBI:58349"/>
        <dbReference type="ChEBI" id="CHEBI:65315"/>
        <dbReference type="ChEBI" id="CHEBI:74443"/>
    </reaction>
</comment>
<comment type="catalytic activity">
    <reaction evidence="2">
        <text>5,6-dihydrouridine(20a) in tRNA + NAD(+) = uridine(20a) in tRNA + NADH + H(+)</text>
        <dbReference type="Rhea" id="RHEA:53348"/>
        <dbReference type="Rhea" id="RHEA-COMP:13535"/>
        <dbReference type="Rhea" id="RHEA-COMP:13536"/>
        <dbReference type="ChEBI" id="CHEBI:15378"/>
        <dbReference type="ChEBI" id="CHEBI:57540"/>
        <dbReference type="ChEBI" id="CHEBI:57945"/>
        <dbReference type="ChEBI" id="CHEBI:65315"/>
        <dbReference type="ChEBI" id="CHEBI:74443"/>
    </reaction>
</comment>
<comment type="cofactor">
    <cofactor evidence="2 6">
        <name>FMN</name>
        <dbReference type="ChEBI" id="CHEBI:58210"/>
    </cofactor>
</comment>
<comment type="similarity">
    <text evidence="2">Belongs to the Dus family. DusA subfamily.</text>
</comment>